<accession>Q6EW37</accession>
<protein>
    <recommendedName>
        <fullName evidence="1">Cytochrome b559 subunit beta</fullName>
    </recommendedName>
    <alternativeName>
        <fullName evidence="1">PSII reaction center subunit VI</fullName>
    </alternativeName>
</protein>
<gene>
    <name evidence="1" type="primary">psbF</name>
</gene>
<sequence>MTIDRTYPIFTVRWLAVHGLAVPTVFFLGSISAMQFIQR</sequence>
<feature type="chain" id="PRO_0000200428" description="Cytochrome b559 subunit beta">
    <location>
        <begin position="1"/>
        <end position="39"/>
    </location>
</feature>
<feature type="transmembrane region" description="Helical" evidence="1">
    <location>
        <begin position="14"/>
        <end position="30"/>
    </location>
</feature>
<feature type="binding site" description="axial binding residue" evidence="1">
    <location>
        <position position="18"/>
    </location>
    <ligand>
        <name>heme</name>
        <dbReference type="ChEBI" id="CHEBI:30413"/>
        <note>ligand shared with alpha subunit</note>
    </ligand>
    <ligandPart>
        <name>Fe</name>
        <dbReference type="ChEBI" id="CHEBI:18248"/>
    </ligandPart>
</feature>
<keyword id="KW-0150">Chloroplast</keyword>
<keyword id="KW-0249">Electron transport</keyword>
<keyword id="KW-0349">Heme</keyword>
<keyword id="KW-0408">Iron</keyword>
<keyword id="KW-0472">Membrane</keyword>
<keyword id="KW-0479">Metal-binding</keyword>
<keyword id="KW-0602">Photosynthesis</keyword>
<keyword id="KW-0604">Photosystem II</keyword>
<keyword id="KW-0934">Plastid</keyword>
<keyword id="KW-0793">Thylakoid</keyword>
<keyword id="KW-0812">Transmembrane</keyword>
<keyword id="KW-1133">Transmembrane helix</keyword>
<keyword id="KW-0813">Transport</keyword>
<name>PSBF_NYMAL</name>
<comment type="function">
    <text evidence="1">This b-type cytochrome is tightly associated with the reaction center of photosystem II (PSII). PSII is a light-driven water:plastoquinone oxidoreductase that uses light energy to abstract electrons from H(2)O, generating O(2) and a proton gradient subsequently used for ATP formation. It consists of a core antenna complex that captures photons, and an electron transfer chain that converts photonic excitation into a charge separation.</text>
</comment>
<comment type="cofactor">
    <cofactor evidence="1">
        <name>heme b</name>
        <dbReference type="ChEBI" id="CHEBI:60344"/>
    </cofactor>
    <text evidence="1">With its partner (PsbE) binds heme. PSII binds additional chlorophylls, carotenoids and specific lipids.</text>
</comment>
<comment type="subunit">
    <text evidence="1">Heterodimer of an alpha subunit and a beta subunit. PSII is composed of 1 copy each of membrane proteins PsbA, PsbB, PsbC, PsbD, PsbE, PsbF, PsbH, PsbI, PsbJ, PsbK, PsbL, PsbM, PsbT, PsbX, PsbY, PsbZ, Psb30/Ycf12, at least 3 peripheral proteins of the oxygen-evolving complex and a large number of cofactors. It forms dimeric complexes.</text>
</comment>
<comment type="subcellular location">
    <subcellularLocation>
        <location evidence="1">Plastid</location>
        <location evidence="1">Chloroplast thylakoid membrane</location>
        <topology evidence="1">Single-pass membrane protein</topology>
    </subcellularLocation>
</comment>
<comment type="similarity">
    <text evidence="1">Belongs to the PsbE/PsbF family.</text>
</comment>
<reference key="1">
    <citation type="journal article" date="2004" name="Mol. Biol. Evol.">
        <title>The chloroplast genome of Nymphaea alba: whole-genome analyses and the problem of identifying the most basal angiosperm.</title>
        <authorList>
            <person name="Goremykin V.V."/>
            <person name="Hirsch-Ernst K.I."/>
            <person name="Woelfl S."/>
            <person name="Hellwig F.H."/>
        </authorList>
    </citation>
    <scope>NUCLEOTIDE SEQUENCE [LARGE SCALE GENOMIC DNA]</scope>
</reference>
<dbReference type="EMBL" id="AJ627251">
    <property type="protein sequence ID" value="CAF28609.1"/>
    <property type="molecule type" value="Genomic_DNA"/>
</dbReference>
<dbReference type="RefSeq" id="YP_053171.1">
    <property type="nucleotide sequence ID" value="NC_006050.1"/>
</dbReference>
<dbReference type="SMR" id="Q6EW37"/>
<dbReference type="GeneID" id="2896267"/>
<dbReference type="GO" id="GO:0009535">
    <property type="term" value="C:chloroplast thylakoid membrane"/>
    <property type="evidence" value="ECO:0007669"/>
    <property type="project" value="UniProtKB-SubCell"/>
</dbReference>
<dbReference type="GO" id="GO:0009539">
    <property type="term" value="C:photosystem II reaction center"/>
    <property type="evidence" value="ECO:0007669"/>
    <property type="project" value="InterPro"/>
</dbReference>
<dbReference type="GO" id="GO:0009055">
    <property type="term" value="F:electron transfer activity"/>
    <property type="evidence" value="ECO:0007669"/>
    <property type="project" value="UniProtKB-UniRule"/>
</dbReference>
<dbReference type="GO" id="GO:0020037">
    <property type="term" value="F:heme binding"/>
    <property type="evidence" value="ECO:0007669"/>
    <property type="project" value="InterPro"/>
</dbReference>
<dbReference type="GO" id="GO:0005506">
    <property type="term" value="F:iron ion binding"/>
    <property type="evidence" value="ECO:0007669"/>
    <property type="project" value="UniProtKB-UniRule"/>
</dbReference>
<dbReference type="GO" id="GO:0009767">
    <property type="term" value="P:photosynthetic electron transport chain"/>
    <property type="evidence" value="ECO:0007669"/>
    <property type="project" value="InterPro"/>
</dbReference>
<dbReference type="HAMAP" id="MF_00643">
    <property type="entry name" value="PSII_PsbF"/>
    <property type="match status" value="1"/>
</dbReference>
<dbReference type="InterPro" id="IPR006241">
    <property type="entry name" value="PSII_cyt_b559_bsu"/>
</dbReference>
<dbReference type="InterPro" id="IPR006216">
    <property type="entry name" value="PSII_cyt_b559_CS"/>
</dbReference>
<dbReference type="InterPro" id="IPR013081">
    <property type="entry name" value="PSII_cyt_b559_N"/>
</dbReference>
<dbReference type="NCBIfam" id="TIGR01333">
    <property type="entry name" value="cyt_b559_beta"/>
    <property type="match status" value="1"/>
</dbReference>
<dbReference type="Pfam" id="PF00283">
    <property type="entry name" value="Cytochrom_B559"/>
    <property type="match status" value="1"/>
</dbReference>
<dbReference type="PIRSF" id="PIRSF000037">
    <property type="entry name" value="PsbF"/>
    <property type="match status" value="1"/>
</dbReference>
<dbReference type="SUPFAM" id="SSF161045">
    <property type="entry name" value="Cytochrome b559 subunits"/>
    <property type="match status" value="1"/>
</dbReference>
<dbReference type="PROSITE" id="PS00537">
    <property type="entry name" value="CYTOCHROME_B559"/>
    <property type="match status" value="1"/>
</dbReference>
<geneLocation type="chloroplast"/>
<organism>
    <name type="scientific">Nymphaea alba</name>
    <name type="common">White water-lily</name>
    <name type="synonym">Castalia alba</name>
    <dbReference type="NCBI Taxonomy" id="34301"/>
    <lineage>
        <taxon>Eukaryota</taxon>
        <taxon>Viridiplantae</taxon>
        <taxon>Streptophyta</taxon>
        <taxon>Embryophyta</taxon>
        <taxon>Tracheophyta</taxon>
        <taxon>Spermatophyta</taxon>
        <taxon>Magnoliopsida</taxon>
        <taxon>Nymphaeales</taxon>
        <taxon>Nymphaeaceae</taxon>
        <taxon>Nymphaea</taxon>
    </lineage>
</organism>
<evidence type="ECO:0000255" key="1">
    <source>
        <dbReference type="HAMAP-Rule" id="MF_00643"/>
    </source>
</evidence>
<proteinExistence type="inferred from homology"/>